<accession>Q7Z3G6</accession>
<accession>Q0VF44</accession>
<name>PRIC2_HUMAN</name>
<proteinExistence type="evidence at protein level"/>
<evidence type="ECO:0000250" key="1">
    <source>
        <dbReference type="UniProtKB" id="Q80Y24"/>
    </source>
</evidence>
<evidence type="ECO:0000255" key="2">
    <source>
        <dbReference type="PROSITE-ProRule" id="PRU00125"/>
    </source>
</evidence>
<evidence type="ECO:0000255" key="3">
    <source>
        <dbReference type="PROSITE-ProRule" id="PRU00636"/>
    </source>
</evidence>
<evidence type="ECO:0000256" key="4">
    <source>
        <dbReference type="SAM" id="MobiDB-lite"/>
    </source>
</evidence>
<evidence type="ECO:0000269" key="5">
    <source>
    </source>
</evidence>
<evidence type="ECO:0000269" key="6">
    <source>
    </source>
</evidence>
<evidence type="ECO:0000269" key="7">
    <source>
    </source>
</evidence>
<evidence type="ECO:0000269" key="8">
    <source>
    </source>
</evidence>
<evidence type="ECO:0000269" key="9">
    <source>
    </source>
</evidence>
<evidence type="ECO:0000305" key="10"/>
<sequence length="844" mass="95615">MVTVMPLEMEKTISKLMFDFQRNSTSDDDSGCALEEYAWVPPGLKPEQVHQYYSCLPEEKVPYVNSPGEKLRIKQLLHQLPPHDNEVRYCNSLDEEEKRELKLFSSQRKRENLGRGNVRPFPVTMTGAICEQCGGQINGGDIAVFASRAGHGVCWHPPCFVCTVCNELLVDLIYFYQDGKIYCGRHHAECLKPRCAACDEIIFADECTEAEGRHWHMKHFCCFECETVLGGQRYIMKEGRPYCCHCFESLYAEYCDTCAQHIGIDQGQMTYDGQHWHATETCFCCAHCKKSLLGRPFLPKQGQIFCSRACSAGEDPNGSDSSDSAFQNARAKESRRSAKIGKNKGKTEEPMLNQHSQLQVSSNRLSADVDPLSLQMDMLSLSSQTPSLNRDPIWRSREEPYHYGNKMEQNQTQSPLQLLSQCNIRTSYSPGGQGAGAQPEMWGKHFSNPKRSSSLAMTGHAGSFIKECREDYYPGRLRSQESYSDMSSQSFSETRGSIQVPKYEEEEEEEGGLSTQQCRTRHPISSLKYTEDMTPTEQTPRGSMESLALSNATGLSADGGAKRQEHLSRFSMPDLSKDSGMNVSEKLSNMGTLNSSMQFRSAESVRSLLSAQQYQEMEGNLHQLSNPIGYRDLQSHGRMHQSFDFDGGMAGSKLPGQEGVRIQPMSERTRRRATSRDDNRRFRPHRSRRSRRSRSDNALHLASEREAISRLKDRPPLRAREDYDQFMRQRSFQESMGHGSRRDLYGQCPRTVSDLALQNAFGDRWGPYFAEYDWCSTCSSSSESDNEGYFLGEPIPQPARLRYVTSDELLHKYSSYGLPKSSTLGGRGQLHSRKRQKSKNCIIS</sequence>
<dbReference type="EMBL" id="AL833539">
    <property type="status" value="NOT_ANNOTATED_CDS"/>
    <property type="molecule type" value="mRNA"/>
</dbReference>
<dbReference type="EMBL" id="BX537915">
    <property type="protein sequence ID" value="CAD97898.1"/>
    <property type="molecule type" value="mRNA"/>
</dbReference>
<dbReference type="EMBL" id="BC119002">
    <property type="protein sequence ID" value="AAI19003.1"/>
    <property type="molecule type" value="mRNA"/>
</dbReference>
<dbReference type="CCDS" id="CCDS2902.1"/>
<dbReference type="RefSeq" id="NP_001357457.1">
    <property type="nucleotide sequence ID" value="NM_001370528.1"/>
</dbReference>
<dbReference type="RefSeq" id="NP_942559.1">
    <property type="nucleotide sequence ID" value="NM_198859.4"/>
</dbReference>
<dbReference type="RefSeq" id="XP_016861287.1">
    <property type="nucleotide sequence ID" value="XM_017005798.1"/>
</dbReference>
<dbReference type="SMR" id="Q7Z3G6"/>
<dbReference type="BioGRID" id="127925">
    <property type="interactions" value="18"/>
</dbReference>
<dbReference type="FunCoup" id="Q7Z3G6">
    <property type="interactions" value="710"/>
</dbReference>
<dbReference type="IntAct" id="Q7Z3G6">
    <property type="interactions" value="6"/>
</dbReference>
<dbReference type="MINT" id="Q7Z3G6"/>
<dbReference type="STRING" id="9606.ENSP00000492363"/>
<dbReference type="GlyConnect" id="1625">
    <property type="glycosylation" value="1 N-Linked glycan (1 site)"/>
</dbReference>
<dbReference type="GlyCosmos" id="Q7Z3G6">
    <property type="glycosylation" value="1 site, 1 glycan"/>
</dbReference>
<dbReference type="GlyGen" id="Q7Z3G6">
    <property type="glycosylation" value="2 sites, 1 N-linked glycan (1 site), 1 O-linked glycan (1 site)"/>
</dbReference>
<dbReference type="iPTMnet" id="Q7Z3G6"/>
<dbReference type="PhosphoSitePlus" id="Q7Z3G6"/>
<dbReference type="BioMuta" id="PRICKLE2"/>
<dbReference type="DMDM" id="85701877"/>
<dbReference type="jPOST" id="Q7Z3G6"/>
<dbReference type="MassIVE" id="Q7Z3G6"/>
<dbReference type="PaxDb" id="9606-ENSP00000295902"/>
<dbReference type="PeptideAtlas" id="Q7Z3G6"/>
<dbReference type="ProteomicsDB" id="69046"/>
<dbReference type="Antibodypedia" id="50866">
    <property type="antibodies" value="71 antibodies from 21 providers"/>
</dbReference>
<dbReference type="DNASU" id="166336"/>
<dbReference type="Ensembl" id="ENST00000564377.6">
    <property type="protein sequence ID" value="ENSP00000455004.2"/>
    <property type="gene ID" value="ENSG00000163637.13"/>
</dbReference>
<dbReference type="Ensembl" id="ENST00000638394.2">
    <property type="protein sequence ID" value="ENSP00000492363.1"/>
    <property type="gene ID" value="ENSG00000163637.13"/>
</dbReference>
<dbReference type="GeneID" id="166336"/>
<dbReference type="KEGG" id="hsa:166336"/>
<dbReference type="MANE-Select" id="ENST00000638394.2">
    <property type="protein sequence ID" value="ENSP00000492363.1"/>
    <property type="RefSeq nucleotide sequence ID" value="NM_198859.4"/>
    <property type="RefSeq protein sequence ID" value="NP_942559.1"/>
</dbReference>
<dbReference type="UCSC" id="uc003dmf.4">
    <property type="organism name" value="human"/>
</dbReference>
<dbReference type="AGR" id="HGNC:20340"/>
<dbReference type="CTD" id="166336"/>
<dbReference type="DisGeNET" id="166336"/>
<dbReference type="GeneCards" id="PRICKLE2"/>
<dbReference type="HGNC" id="HGNC:20340">
    <property type="gene designation" value="PRICKLE2"/>
</dbReference>
<dbReference type="HPA" id="ENSG00000163637">
    <property type="expression patterns" value="Low tissue specificity"/>
</dbReference>
<dbReference type="MalaCards" id="PRICKLE2"/>
<dbReference type="MIM" id="608501">
    <property type="type" value="gene"/>
</dbReference>
<dbReference type="neXtProt" id="NX_Q7Z3G6"/>
<dbReference type="OpenTargets" id="ENSG00000163637"/>
<dbReference type="Orphanet" id="178469">
    <property type="disease" value="Autosomal dominant non-syndromic intellectual disability"/>
</dbReference>
<dbReference type="Orphanet" id="402082">
    <property type="disease" value="Progressive myoclonic epilepsy type 5"/>
</dbReference>
<dbReference type="PharmGKB" id="PA134883144"/>
<dbReference type="VEuPathDB" id="HostDB:ENSG00000163637"/>
<dbReference type="eggNOG" id="KOG1704">
    <property type="taxonomic scope" value="Eukaryota"/>
</dbReference>
<dbReference type="GeneTree" id="ENSGT00940000153629"/>
<dbReference type="HOGENOM" id="CLU_008937_5_0_1"/>
<dbReference type="InParanoid" id="Q7Z3G6"/>
<dbReference type="OMA" id="GMSAQQC"/>
<dbReference type="OrthoDB" id="10069167at2759"/>
<dbReference type="PAN-GO" id="Q7Z3G6">
    <property type="GO annotations" value="0 GO annotations based on evolutionary models"/>
</dbReference>
<dbReference type="PhylomeDB" id="Q7Z3G6"/>
<dbReference type="TreeFam" id="TF313265"/>
<dbReference type="PathwayCommons" id="Q7Z3G6"/>
<dbReference type="SignaLink" id="Q7Z3G6"/>
<dbReference type="BioGRID-ORCS" id="166336">
    <property type="hits" value="11 hits in 1152 CRISPR screens"/>
</dbReference>
<dbReference type="ChiTaRS" id="PRICKLE2">
    <property type="organism name" value="human"/>
</dbReference>
<dbReference type="GenomeRNAi" id="166336"/>
<dbReference type="Pharos" id="Q7Z3G6">
    <property type="development level" value="Tbio"/>
</dbReference>
<dbReference type="PRO" id="PR:Q7Z3G6"/>
<dbReference type="Proteomes" id="UP000005640">
    <property type="component" value="Chromosome 3"/>
</dbReference>
<dbReference type="RNAct" id="Q7Z3G6">
    <property type="molecule type" value="protein"/>
</dbReference>
<dbReference type="Bgee" id="ENSG00000163637">
    <property type="expression patterns" value="Expressed in oviduct epithelium and 171 other cell types or tissues"/>
</dbReference>
<dbReference type="ExpressionAtlas" id="Q7Z3G6">
    <property type="expression patterns" value="baseline and differential"/>
</dbReference>
<dbReference type="GO" id="GO:0005737">
    <property type="term" value="C:cytoplasm"/>
    <property type="evidence" value="ECO:0000314"/>
    <property type="project" value="LIFEdb"/>
</dbReference>
<dbReference type="GO" id="GO:0031965">
    <property type="term" value="C:nuclear membrane"/>
    <property type="evidence" value="ECO:0007669"/>
    <property type="project" value="UniProtKB-SubCell"/>
</dbReference>
<dbReference type="GO" id="GO:0008270">
    <property type="term" value="F:zinc ion binding"/>
    <property type="evidence" value="ECO:0007669"/>
    <property type="project" value="InterPro"/>
</dbReference>
<dbReference type="GO" id="GO:0060071">
    <property type="term" value="P:Wnt signaling pathway, planar cell polarity pathway"/>
    <property type="evidence" value="ECO:0000303"/>
    <property type="project" value="ParkinsonsUK-UCL"/>
</dbReference>
<dbReference type="CDD" id="cd09415">
    <property type="entry name" value="LIM1_Prickle"/>
    <property type="match status" value="1"/>
</dbReference>
<dbReference type="CDD" id="cd09418">
    <property type="entry name" value="LIM2_Prickle"/>
    <property type="match status" value="1"/>
</dbReference>
<dbReference type="CDD" id="cd09420">
    <property type="entry name" value="LIM3_Prickle"/>
    <property type="match status" value="1"/>
</dbReference>
<dbReference type="CDD" id="cd09827">
    <property type="entry name" value="PET_Prickle"/>
    <property type="match status" value="1"/>
</dbReference>
<dbReference type="FunFam" id="2.10.110.10:FF:000022">
    <property type="entry name" value="prickle-like protein 2 isoform X1"/>
    <property type="match status" value="1"/>
</dbReference>
<dbReference type="FunFam" id="2.10.110.10:FF:000035">
    <property type="entry name" value="prickle-like protein 2 isoform X1"/>
    <property type="match status" value="1"/>
</dbReference>
<dbReference type="FunFam" id="2.10.110.10:FF:000005">
    <property type="entry name" value="Testin isoform 1"/>
    <property type="match status" value="1"/>
</dbReference>
<dbReference type="Gene3D" id="2.10.110.10">
    <property type="entry name" value="Cysteine Rich Protein"/>
    <property type="match status" value="3"/>
</dbReference>
<dbReference type="InterPro" id="IPR033725">
    <property type="entry name" value="LIM1_prickle"/>
</dbReference>
<dbReference type="InterPro" id="IPR033726">
    <property type="entry name" value="LIM2_prickle"/>
</dbReference>
<dbReference type="InterPro" id="IPR033727">
    <property type="entry name" value="LIM3_prickle"/>
</dbReference>
<dbReference type="InterPro" id="IPR010442">
    <property type="entry name" value="PET_domain"/>
</dbReference>
<dbReference type="InterPro" id="IPR033723">
    <property type="entry name" value="PET_prickle"/>
</dbReference>
<dbReference type="InterPro" id="IPR047120">
    <property type="entry name" value="Pk/Esn/Tes"/>
</dbReference>
<dbReference type="InterPro" id="IPR001781">
    <property type="entry name" value="Znf_LIM"/>
</dbReference>
<dbReference type="PANTHER" id="PTHR24211">
    <property type="entry name" value="LIM DOMAIN-CONTAINING PROTEIN"/>
    <property type="match status" value="1"/>
</dbReference>
<dbReference type="PANTHER" id="PTHR24211:SF18">
    <property type="entry name" value="PRICKLE-LIKE PROTEIN 2"/>
    <property type="match status" value="1"/>
</dbReference>
<dbReference type="Pfam" id="PF00412">
    <property type="entry name" value="LIM"/>
    <property type="match status" value="3"/>
</dbReference>
<dbReference type="Pfam" id="PF06297">
    <property type="entry name" value="PET"/>
    <property type="match status" value="1"/>
</dbReference>
<dbReference type="SMART" id="SM00132">
    <property type="entry name" value="LIM"/>
    <property type="match status" value="3"/>
</dbReference>
<dbReference type="SUPFAM" id="SSF57716">
    <property type="entry name" value="Glucocorticoid receptor-like (DNA-binding domain)"/>
    <property type="match status" value="2"/>
</dbReference>
<dbReference type="PROSITE" id="PS00478">
    <property type="entry name" value="LIM_DOMAIN_1"/>
    <property type="match status" value="2"/>
</dbReference>
<dbReference type="PROSITE" id="PS50023">
    <property type="entry name" value="LIM_DOMAIN_2"/>
    <property type="match status" value="3"/>
</dbReference>
<dbReference type="PROSITE" id="PS51303">
    <property type="entry name" value="PET"/>
    <property type="match status" value="1"/>
</dbReference>
<gene>
    <name type="primary">PRICKLE2</name>
</gene>
<keyword id="KW-0225">Disease variant</keyword>
<keyword id="KW-0887">Epilepsy</keyword>
<keyword id="KW-0440">LIM domain</keyword>
<keyword id="KW-0449">Lipoprotein</keyword>
<keyword id="KW-0472">Membrane</keyword>
<keyword id="KW-0479">Metal-binding</keyword>
<keyword id="KW-0488">Methylation</keyword>
<keyword id="KW-0523">Neurodegeneration</keyword>
<keyword id="KW-0622">Neuropathy</keyword>
<keyword id="KW-0539">Nucleus</keyword>
<keyword id="KW-0597">Phosphoprotein</keyword>
<keyword id="KW-0636">Prenylation</keyword>
<keyword id="KW-1267">Proteomics identification</keyword>
<keyword id="KW-1185">Reference proteome</keyword>
<keyword id="KW-0677">Repeat</keyword>
<keyword id="KW-0862">Zinc</keyword>
<protein>
    <recommendedName>
        <fullName>Prickle-like protein 2</fullName>
    </recommendedName>
</protein>
<feature type="chain" id="PRO_0000075891" description="Prickle-like protein 2">
    <location>
        <begin position="1"/>
        <end position="841"/>
    </location>
</feature>
<feature type="propeptide" id="PRO_0000396718" description="Removed in mature form" evidence="10">
    <location>
        <begin position="842"/>
        <end position="844"/>
    </location>
</feature>
<feature type="domain" description="PET" evidence="3">
    <location>
        <begin position="18"/>
        <end position="126"/>
    </location>
</feature>
<feature type="domain" description="LIM zinc-binding 1" evidence="2">
    <location>
        <begin position="128"/>
        <end position="193"/>
    </location>
</feature>
<feature type="domain" description="LIM zinc-binding 2" evidence="2">
    <location>
        <begin position="193"/>
        <end position="253"/>
    </location>
</feature>
<feature type="domain" description="LIM zinc-binding 3" evidence="2">
    <location>
        <begin position="253"/>
        <end position="317"/>
    </location>
</feature>
<feature type="region of interest" description="Disordered" evidence="4">
    <location>
        <begin position="314"/>
        <end position="350"/>
    </location>
</feature>
<feature type="region of interest" description="Disordered" evidence="4">
    <location>
        <begin position="481"/>
        <end position="519"/>
    </location>
</feature>
<feature type="region of interest" description="Disordered" evidence="4">
    <location>
        <begin position="639"/>
        <end position="709"/>
    </location>
</feature>
<feature type="region of interest" description="Disordered" evidence="4">
    <location>
        <begin position="822"/>
        <end position="844"/>
    </location>
</feature>
<feature type="compositionally biased region" description="Polar residues" evidence="4">
    <location>
        <begin position="318"/>
        <end position="327"/>
    </location>
</feature>
<feature type="compositionally biased region" description="Low complexity" evidence="4">
    <location>
        <begin position="481"/>
        <end position="493"/>
    </location>
</feature>
<feature type="compositionally biased region" description="Basic residues" evidence="4">
    <location>
        <begin position="682"/>
        <end position="692"/>
    </location>
</feature>
<feature type="compositionally biased region" description="Basic and acidic residues" evidence="4">
    <location>
        <begin position="693"/>
        <end position="709"/>
    </location>
</feature>
<feature type="modified residue" description="Phosphoserine" evidence="1">
    <location>
        <position position="92"/>
    </location>
</feature>
<feature type="modified residue" description="Phosphoserine" evidence="1">
    <location>
        <position position="319"/>
    </location>
</feature>
<feature type="modified residue" description="Phosphoserine" evidence="1">
    <location>
        <position position="321"/>
    </location>
</feature>
<feature type="modified residue" description="Phosphoserine" evidence="1">
    <location>
        <position position="322"/>
    </location>
</feature>
<feature type="modified residue" description="Phosphothreonine" evidence="1">
    <location>
        <position position="534"/>
    </location>
</feature>
<feature type="modified residue" description="Phosphothreonine" evidence="1">
    <location>
        <position position="536"/>
    </location>
</feature>
<feature type="modified residue" description="Phosphothreonine" evidence="1">
    <location>
        <position position="539"/>
    </location>
</feature>
<feature type="modified residue" description="Phosphoserine" evidence="1">
    <location>
        <position position="543"/>
    </location>
</feature>
<feature type="modified residue" description="Phosphoserine" evidence="1">
    <location>
        <position position="546"/>
    </location>
</feature>
<feature type="modified residue" description="Phosphoserine" evidence="1">
    <location>
        <position position="607"/>
    </location>
</feature>
<feature type="modified residue" description="Phosphoserine" evidence="1">
    <location>
        <position position="642"/>
    </location>
</feature>
<feature type="modified residue" description="Phosphoserine" evidence="1">
    <location>
        <position position="731"/>
    </location>
</feature>
<feature type="modified residue" description="Cysteine methyl ester" evidence="10">
    <location>
        <position position="841"/>
    </location>
</feature>
<feature type="lipid moiety-binding region" description="S-farnesyl cysteine" evidence="6">
    <location>
        <position position="841"/>
    </location>
</feature>
<feature type="sequence variant" id="VAR_065582" description="Found in patients with severe progressive myoclonic epilepsy; uncertain significance; results in increased protein activity when associated with I-153; less active in stimulating calcium release when associated with I-153; dbSNP:rs387906988." evidence="7">
    <original>R</original>
    <variation>H</variation>
    <location>
        <position position="148"/>
    </location>
</feature>
<feature type="sequence variant" id="VAR_065583" description="Found in patients with severe progressive myoclonic epilepsy; uncertain significance; results in increased protein activity when associated with H-148; less active in stimulating calcium release when associated with H-148; dbSNP:rs139747674." evidence="7">
    <original>V</original>
    <variation>I</variation>
    <location>
        <position position="153"/>
    </location>
</feature>
<feature type="sequence variant" id="VAR_065584" description="Found in a patient with myoclonic epilepsy; uncertain significance; results in decreased protein activity; less active in stimulating calcium release compared to wild-type; dbSNP:rs387906989." evidence="7">
    <original>V</original>
    <variation>F</variation>
    <location>
        <position position="605"/>
    </location>
</feature>
<organism>
    <name type="scientific">Homo sapiens</name>
    <name type="common">Human</name>
    <dbReference type="NCBI Taxonomy" id="9606"/>
    <lineage>
        <taxon>Eukaryota</taxon>
        <taxon>Metazoa</taxon>
        <taxon>Chordata</taxon>
        <taxon>Craniata</taxon>
        <taxon>Vertebrata</taxon>
        <taxon>Euteleostomi</taxon>
        <taxon>Mammalia</taxon>
        <taxon>Eutheria</taxon>
        <taxon>Euarchontoglires</taxon>
        <taxon>Primates</taxon>
        <taxon>Haplorrhini</taxon>
        <taxon>Catarrhini</taxon>
        <taxon>Hominidae</taxon>
        <taxon>Homo</taxon>
    </lineage>
</organism>
<comment type="subcellular location">
    <subcellularLocation>
        <location evidence="10">Nucleus membrane</location>
    </subcellularLocation>
</comment>
<comment type="tissue specificity">
    <text evidence="5">Expressed in brain, eye and testis. Additionally in fetal brain, adult cartilage, pancreatic islet, gastric cancer and uterus tumors.</text>
</comment>
<comment type="disease">
    <text evidence="7 8 9">PRICKLE2 mutations have been found in patients with myoclonic epilepsy but involvement of this gene in pathogenesis is under debate since some of the patients also carry POLG mutations.</text>
</comment>
<comment type="similarity">
    <text evidence="10">Belongs to the prickle / espinas / testin family.</text>
</comment>
<reference key="1">
    <citation type="journal article" date="2007" name="BMC Genomics">
        <title>The full-ORF clone resource of the German cDNA consortium.</title>
        <authorList>
            <person name="Bechtel S."/>
            <person name="Rosenfelder H."/>
            <person name="Duda A."/>
            <person name="Schmidt C.P."/>
            <person name="Ernst U."/>
            <person name="Wellenreuther R."/>
            <person name="Mehrle A."/>
            <person name="Schuster C."/>
            <person name="Bahr A."/>
            <person name="Bloecker H."/>
            <person name="Heubner D."/>
            <person name="Hoerlein A."/>
            <person name="Michel G."/>
            <person name="Wedler H."/>
            <person name="Koehrer K."/>
            <person name="Ottenwaelder B."/>
            <person name="Poustka A."/>
            <person name="Wiemann S."/>
            <person name="Schupp I."/>
        </authorList>
    </citation>
    <scope>NUCLEOTIDE SEQUENCE [LARGE SCALE MRNA]</scope>
    <source>
        <tissue>Cervix</tissue>
    </source>
</reference>
<reference key="2">
    <citation type="journal article" date="2004" name="Genome Res.">
        <title>The status, quality, and expansion of the NIH full-length cDNA project: the Mammalian Gene Collection (MGC).</title>
        <authorList>
            <consortium name="The MGC Project Team"/>
        </authorList>
    </citation>
    <scope>NUCLEOTIDE SEQUENCE [LARGE SCALE MRNA]</scope>
</reference>
<reference key="3">
    <citation type="journal article" date="2003" name="Int. J. Mol. Med.">
        <title>Identification and characterization of human PRICKLE1 and PRICKLE2 genes as well as mouse Prickle1 and Prickle2 genes homologous to Drosophila tissue polarity gene prickle.</title>
        <authorList>
            <person name="Katoh M."/>
            <person name="Katoh M."/>
        </authorList>
    </citation>
    <scope>IDENTIFICATION</scope>
    <scope>TISSUE SPECIFICITY</scope>
</reference>
<reference key="4">
    <citation type="journal article" date="2007" name="PLoS Comput. Biol.">
        <title>Towards complete sets of farnesylated and geranylgeranylated proteins.</title>
        <authorList>
            <person name="Maurer-Stroh S."/>
            <person name="Koranda M."/>
            <person name="Benetka W."/>
            <person name="Schneider G."/>
            <person name="Sirota F.L."/>
            <person name="Eisenhaber F."/>
        </authorList>
    </citation>
    <scope>ISOPRENYLATION AT CYS-841</scope>
</reference>
<reference key="5">
    <citation type="journal article" date="2011" name="Am. J. Hum. Genet.">
        <title>Mutations in prickle orthologs cause seizures in flies, mice, and humans.</title>
        <authorList>
            <person name="Tao H."/>
            <person name="Manak J.R."/>
            <person name="Sowers L."/>
            <person name="Mei X."/>
            <person name="Kiyonari H."/>
            <person name="Abe T."/>
            <person name="Dahdaleh N.S."/>
            <person name="Yang T."/>
            <person name="Wu S."/>
            <person name="Chen S."/>
            <person name="Fox M.H."/>
            <person name="Gurnett C."/>
            <person name="Montine T."/>
            <person name="Bird T."/>
            <person name="Shaffer L.G."/>
            <person name="Rosenfeld J.A."/>
            <person name="McConnell J."/>
            <person name="Madan-Khetarpal S."/>
            <person name="Berry-Kravis E."/>
            <person name="Griesbach H."/>
            <person name="Saneto R.P."/>
            <person name="Scott M.P."/>
            <person name="Antic D."/>
            <person name="Reed J."/>
            <person name="Boland R."/>
            <person name="Ehaideb S.N."/>
            <person name="El-Shanti H."/>
            <person name="Mahajan V.B."/>
            <person name="Ferguson P.J."/>
            <person name="Axelrod J.D."/>
            <person name="Lehesjoki A.E."/>
            <person name="Fritzsch B."/>
            <person name="Slusarski D.C."/>
            <person name="Wemmie J."/>
            <person name="Ueno N."/>
            <person name="Bassuk A.G."/>
        </authorList>
    </citation>
    <scope>PROBABLE INVOLVEMENT IN MYOCLONIC EPILEPSY</scope>
    <scope>VARIANTS HIS-148; ILE-153 AND PHE-605</scope>
    <scope>CHARACTERIZATION OF VARIANTS HIS-148; ILE-153 AND PHE-605</scope>
</reference>
<reference key="6">
    <citation type="journal article" date="2016" name="Am. J. Hum. Genet.">
        <title>PRICKLE2 mutations might not be involved in epilepsy.</title>
        <authorList>
            <person name="Sandford E."/>
            <person name="Bird T.D."/>
            <person name="Li J.Z."/>
            <person name="Burmeister M."/>
        </authorList>
    </citation>
    <scope>LACK OF INVOLVEMENT IN MYOCLONIC EPILEPSY</scope>
</reference>
<reference key="7">
    <citation type="journal article" date="2016" name="Am. J. Hum. Genet.">
        <title>Response to Sandford et al.: PRICKLE2 variants in epilepsy: A call for precision medicine.</title>
        <authorList>
            <person name="Mahajan V.B."/>
            <person name="Bassuk A.G."/>
        </authorList>
    </citation>
    <scope>PROBABLE INVOLVEMENT IN MYOCLONIC EPILEPSY</scope>
</reference>